<feature type="chain" id="PRO_1000206608" description="Cell division protein ZipA">
    <location>
        <begin position="1"/>
        <end position="328"/>
    </location>
</feature>
<feature type="topological domain" description="Periplasmic" evidence="1">
    <location>
        <begin position="1"/>
        <end position="6"/>
    </location>
</feature>
<feature type="transmembrane region" description="Helical" evidence="1">
    <location>
        <begin position="7"/>
        <end position="27"/>
    </location>
</feature>
<feature type="topological domain" description="Cytoplasmic" evidence="1">
    <location>
        <begin position="28"/>
        <end position="328"/>
    </location>
</feature>
<feature type="region of interest" description="Disordered" evidence="2">
    <location>
        <begin position="42"/>
        <end position="186"/>
    </location>
</feature>
<feature type="compositionally biased region" description="Acidic residues" evidence="2">
    <location>
        <begin position="51"/>
        <end position="63"/>
    </location>
</feature>
<feature type="compositionally biased region" description="Low complexity" evidence="2">
    <location>
        <begin position="97"/>
        <end position="115"/>
    </location>
</feature>
<feature type="compositionally biased region" description="Low complexity" evidence="2">
    <location>
        <begin position="123"/>
        <end position="171"/>
    </location>
</feature>
<organism>
    <name type="scientific">Escherichia coli (strain K12 / MC4100 / BW2952)</name>
    <dbReference type="NCBI Taxonomy" id="595496"/>
    <lineage>
        <taxon>Bacteria</taxon>
        <taxon>Pseudomonadati</taxon>
        <taxon>Pseudomonadota</taxon>
        <taxon>Gammaproteobacteria</taxon>
        <taxon>Enterobacterales</taxon>
        <taxon>Enterobacteriaceae</taxon>
        <taxon>Escherichia</taxon>
    </lineage>
</organism>
<comment type="function">
    <text evidence="1">Essential cell division protein that stabilizes the FtsZ protofilaments by cross-linking them and that serves as a cytoplasmic membrane anchor for the Z ring. Also required for the recruitment to the septal ring of downstream cell division proteins.</text>
</comment>
<comment type="subunit">
    <text evidence="1">Interacts with FtsZ via their C-terminal domains.</text>
</comment>
<comment type="subcellular location">
    <subcellularLocation>
        <location evidence="1">Cell inner membrane</location>
        <topology evidence="1">Single-pass type I membrane protein</topology>
    </subcellularLocation>
    <text evidence="1">Localizes to the Z ring in an FtsZ-dependent manner.</text>
</comment>
<comment type="similarity">
    <text evidence="1">Belongs to the ZipA family.</text>
</comment>
<name>ZIPA_ECOBW</name>
<proteinExistence type="inferred from homology"/>
<sequence length="328" mass="36475">MMQDLRLILIIVGAIAIIALLVHGFWTSRKERSSMFRDRPLKRMKSKRDDDSYDEDVEDDEGVGEVRVHRVNHAPANAQEHEAARPSPQHQYQPPYASAQPRQPVQQPPEAQVPPQHAPHPAQPVQQPAYQPQPEQPLQQPVSPQVAPAPQPVHSAPQPAQQAFQPAEPVAAPQPEPVAEPAPVMDKPKRKEAVIIMNVAAHHGSELNGELLLNSIQQAGFIFGDMNIYHRHLSPDGSGPALFSLANMVKPGTFDPEMKDFTTPGVTIFMQVPSYGDELQNFKLMLQSAQHIADEVGGVVLDDQRRMMTPQKLREYQDIIREVKDANA</sequence>
<gene>
    <name evidence="1" type="primary">zipA</name>
    <name type="ordered locus">BWG_2174</name>
</gene>
<protein>
    <recommendedName>
        <fullName evidence="1">Cell division protein ZipA</fullName>
    </recommendedName>
</protein>
<evidence type="ECO:0000255" key="1">
    <source>
        <dbReference type="HAMAP-Rule" id="MF_00509"/>
    </source>
</evidence>
<evidence type="ECO:0000256" key="2">
    <source>
        <dbReference type="SAM" id="MobiDB-lite"/>
    </source>
</evidence>
<reference key="1">
    <citation type="journal article" date="2009" name="J. Bacteriol.">
        <title>Genomic sequencing reveals regulatory mutations and recombinational events in the widely used MC4100 lineage of Escherichia coli K-12.</title>
        <authorList>
            <person name="Ferenci T."/>
            <person name="Zhou Z."/>
            <person name="Betteridge T."/>
            <person name="Ren Y."/>
            <person name="Liu Y."/>
            <person name="Feng L."/>
            <person name="Reeves P.R."/>
            <person name="Wang L."/>
        </authorList>
    </citation>
    <scope>NUCLEOTIDE SEQUENCE [LARGE SCALE GENOMIC DNA]</scope>
    <source>
        <strain>K12 / MC4100 / BW2952</strain>
    </source>
</reference>
<keyword id="KW-0131">Cell cycle</keyword>
<keyword id="KW-0132">Cell division</keyword>
<keyword id="KW-0997">Cell inner membrane</keyword>
<keyword id="KW-1003">Cell membrane</keyword>
<keyword id="KW-0472">Membrane</keyword>
<keyword id="KW-0812">Transmembrane</keyword>
<keyword id="KW-1133">Transmembrane helix</keyword>
<dbReference type="EMBL" id="CP001396">
    <property type="protein sequence ID" value="ACR62126.1"/>
    <property type="molecule type" value="Genomic_DNA"/>
</dbReference>
<dbReference type="RefSeq" id="WP_001300494.1">
    <property type="nucleotide sequence ID" value="NC_012759.1"/>
</dbReference>
<dbReference type="SMR" id="C4ZVU3"/>
<dbReference type="KEGG" id="ebw:BWG_2174"/>
<dbReference type="HOGENOM" id="CLU_030174_1_0_6"/>
<dbReference type="GO" id="GO:0032153">
    <property type="term" value="C:cell division site"/>
    <property type="evidence" value="ECO:0007669"/>
    <property type="project" value="UniProtKB-UniRule"/>
</dbReference>
<dbReference type="GO" id="GO:0005886">
    <property type="term" value="C:plasma membrane"/>
    <property type="evidence" value="ECO:0007669"/>
    <property type="project" value="UniProtKB-SubCell"/>
</dbReference>
<dbReference type="GO" id="GO:0000917">
    <property type="term" value="P:division septum assembly"/>
    <property type="evidence" value="ECO:0007669"/>
    <property type="project" value="TreeGrafter"/>
</dbReference>
<dbReference type="GO" id="GO:0043093">
    <property type="term" value="P:FtsZ-dependent cytokinesis"/>
    <property type="evidence" value="ECO:0007669"/>
    <property type="project" value="UniProtKB-UniRule"/>
</dbReference>
<dbReference type="CDD" id="cd00231">
    <property type="entry name" value="ZipA"/>
    <property type="match status" value="1"/>
</dbReference>
<dbReference type="FunFam" id="3.30.1400.10:FF:000001">
    <property type="entry name" value="Cell division protein ZipA"/>
    <property type="match status" value="1"/>
</dbReference>
<dbReference type="Gene3D" id="3.30.1400.10">
    <property type="entry name" value="ZipA, C-terminal FtsZ-binding domain"/>
    <property type="match status" value="1"/>
</dbReference>
<dbReference type="HAMAP" id="MF_00509">
    <property type="entry name" value="ZipA"/>
    <property type="match status" value="1"/>
</dbReference>
<dbReference type="InterPro" id="IPR011919">
    <property type="entry name" value="Cell_div_ZipA"/>
</dbReference>
<dbReference type="InterPro" id="IPR007449">
    <property type="entry name" value="ZipA_FtsZ-bd_C"/>
</dbReference>
<dbReference type="InterPro" id="IPR036765">
    <property type="entry name" value="ZipA_FtsZ-bd_C_sf"/>
</dbReference>
<dbReference type="NCBIfam" id="TIGR02205">
    <property type="entry name" value="septum_zipA"/>
    <property type="match status" value="1"/>
</dbReference>
<dbReference type="PANTHER" id="PTHR38685">
    <property type="entry name" value="CELL DIVISION PROTEIN ZIPA"/>
    <property type="match status" value="1"/>
</dbReference>
<dbReference type="PANTHER" id="PTHR38685:SF1">
    <property type="entry name" value="CELL DIVISION PROTEIN ZIPA"/>
    <property type="match status" value="1"/>
</dbReference>
<dbReference type="Pfam" id="PF04354">
    <property type="entry name" value="ZipA_C"/>
    <property type="match status" value="1"/>
</dbReference>
<dbReference type="SMART" id="SM00771">
    <property type="entry name" value="ZipA_C"/>
    <property type="match status" value="1"/>
</dbReference>
<dbReference type="SUPFAM" id="SSF64383">
    <property type="entry name" value="Cell-division protein ZipA, C-terminal domain"/>
    <property type="match status" value="1"/>
</dbReference>
<accession>C4ZVU3</accession>